<proteinExistence type="evidence at protein level"/>
<sequence>MKLLVGTLRLWEVGRQVAFSSLTPGQECSGLRKTFWAAMRAVRTRADHQKLGHCVTMGRIMRPDDANVAGNVHGGTILKMIEEAGAIISTRHCNSQNGERCVAALARVERTDFLSPMCIGEVAHVSAEITYTSKHSVEVQVHVMSENILTGTKKLTNKATLWYVPLSLKNVDKVLEVPPIVYLRQEQEEEGRKRYEAQKLERMETKWRNGDIVQPVLNPEPNTVSYSQSSLIHLVGPSDCTLHGFVHGGVTMKLMDEVAGIVAARHCKTNIVTASVDAINFHDKIRKGCVITISGRMTFTSNKSMEIEVLVDADPVVDNSQKRYRAASAFFTYVSLNQEGKPMPVPQLVPETEDEKKRFEEGKGRYLQMKAKRQGHTEPQP</sequence>
<name>BACH_MOUSE</name>
<dbReference type="EC" id="3.1.2.2" evidence="2"/>
<dbReference type="EMBL" id="AB088411">
    <property type="protein sequence ID" value="BAC20217.1"/>
    <property type="molecule type" value="mRNA"/>
</dbReference>
<dbReference type="EMBL" id="AB088412">
    <property type="protein sequence ID" value="BAC20218.1"/>
    <property type="molecule type" value="mRNA"/>
</dbReference>
<dbReference type="EMBL" id="AB049821">
    <property type="protein sequence ID" value="BAB61731.1"/>
    <property type="molecule type" value="mRNA"/>
</dbReference>
<dbReference type="EMBL" id="AB207243">
    <property type="protein sequence ID" value="BAD91166.1"/>
    <property type="molecule type" value="mRNA"/>
</dbReference>
<dbReference type="EMBL" id="AK152277">
    <property type="protein sequence ID" value="BAE31092.1"/>
    <property type="molecule type" value="mRNA"/>
</dbReference>
<dbReference type="EMBL" id="AL611985">
    <property type="status" value="NOT_ANNOTATED_CDS"/>
    <property type="molecule type" value="Genomic_DNA"/>
</dbReference>
<dbReference type="EMBL" id="AL671869">
    <property type="status" value="NOT_ANNOTATED_CDS"/>
    <property type="molecule type" value="Genomic_DNA"/>
</dbReference>
<dbReference type="EMBL" id="AL772240">
    <property type="status" value="NOT_ANNOTATED_CDS"/>
    <property type="molecule type" value="Genomic_DNA"/>
</dbReference>
<dbReference type="EMBL" id="BC013507">
    <property type="protein sequence ID" value="AAH13507.1"/>
    <property type="molecule type" value="mRNA"/>
</dbReference>
<dbReference type="CCDS" id="CCDS51391.2">
    <molecule id="Q91V12-1"/>
</dbReference>
<dbReference type="CCDS" id="CCDS51392.1">
    <molecule id="Q91V12-3"/>
</dbReference>
<dbReference type="RefSeq" id="NP_001139529.2">
    <molecule id="Q91V12-1"/>
    <property type="nucleotide sequence ID" value="NM_001146057.3"/>
</dbReference>
<dbReference type="RefSeq" id="NP_001139530.1">
    <molecule id="Q91V12-3"/>
    <property type="nucleotide sequence ID" value="NM_001146058.2"/>
</dbReference>
<dbReference type="RefSeq" id="NP_579926.2">
    <property type="nucleotide sequence ID" value="NM_133348.2"/>
</dbReference>
<dbReference type="PDB" id="2Q2B">
    <property type="method" value="X-ray"/>
    <property type="resolution" value="2.50 A"/>
    <property type="chains" value="A/B=203-381"/>
</dbReference>
<dbReference type="PDB" id="2V1O">
    <property type="method" value="X-ray"/>
    <property type="resolution" value="1.78 A"/>
    <property type="chains" value="A/B/C/D/E/F=59-206"/>
</dbReference>
<dbReference type="PDB" id="4ZV3">
    <property type="method" value="X-ray"/>
    <property type="resolution" value="3.10 A"/>
    <property type="chains" value="A/B/C=55-369"/>
</dbReference>
<dbReference type="PDB" id="6VFY">
    <property type="method" value="X-ray"/>
    <property type="resolution" value="2.60 A"/>
    <property type="chains" value="D/E/F=55-369"/>
</dbReference>
<dbReference type="PDBsum" id="2Q2B"/>
<dbReference type="PDBsum" id="2V1O"/>
<dbReference type="PDBsum" id="4ZV3"/>
<dbReference type="PDBsum" id="6VFY"/>
<dbReference type="SMR" id="Q91V12"/>
<dbReference type="BioGRID" id="213825">
    <property type="interactions" value="11"/>
</dbReference>
<dbReference type="DIP" id="DIP-54691N"/>
<dbReference type="FunCoup" id="Q91V12">
    <property type="interactions" value="733"/>
</dbReference>
<dbReference type="IntAct" id="Q91V12">
    <property type="interactions" value="3"/>
</dbReference>
<dbReference type="MINT" id="Q91V12"/>
<dbReference type="STRING" id="10090.ENSMUSP00000129121"/>
<dbReference type="GlyGen" id="Q91V12">
    <property type="glycosylation" value="1 site, 1 O-linked glycan (1 site)"/>
</dbReference>
<dbReference type="iPTMnet" id="Q91V12"/>
<dbReference type="PhosphoSitePlus" id="Q91V12"/>
<dbReference type="SwissPalm" id="Q91V12"/>
<dbReference type="REPRODUCTION-2DPAGE" id="Q91V12"/>
<dbReference type="jPOST" id="Q91V12"/>
<dbReference type="PaxDb" id="10090-ENSMUSP00000074827"/>
<dbReference type="PeptideAtlas" id="Q91V12"/>
<dbReference type="ProteomicsDB" id="265194">
    <molecule id="Q91V12-1"/>
</dbReference>
<dbReference type="ProteomicsDB" id="265195">
    <molecule id="Q91V12-2"/>
</dbReference>
<dbReference type="ProteomicsDB" id="265196">
    <molecule id="Q91V12-3"/>
</dbReference>
<dbReference type="ProteomicsDB" id="265197">
    <molecule id="Q91V12-4"/>
</dbReference>
<dbReference type="Pumba" id="Q91V12"/>
<dbReference type="Antibodypedia" id="12967">
    <property type="antibodies" value="160 antibodies from 22 providers"/>
</dbReference>
<dbReference type="DNASU" id="70025"/>
<dbReference type="Ensembl" id="ENSMUST00000030779.10">
    <molecule id="Q91V12-1"/>
    <property type="protein sequence ID" value="ENSMUSP00000030779.4"/>
    <property type="gene ID" value="ENSMUSG00000028937.15"/>
</dbReference>
<dbReference type="Ensembl" id="ENSMUST00000075363.10">
    <molecule id="Q91V12-4"/>
    <property type="protein sequence ID" value="ENSMUSP00000074827.4"/>
    <property type="gene ID" value="ENSMUSG00000028937.15"/>
</dbReference>
<dbReference type="Ensembl" id="ENSMUST00000105652.3">
    <molecule id="Q91V12-3"/>
    <property type="protein sequence ID" value="ENSMUSP00000101277.3"/>
    <property type="gene ID" value="ENSMUSG00000028937.15"/>
</dbReference>
<dbReference type="GeneID" id="70025"/>
<dbReference type="KEGG" id="mmu:70025"/>
<dbReference type="UCSC" id="uc008vzx.2">
    <molecule id="Q91V12-4"/>
    <property type="organism name" value="mouse"/>
</dbReference>
<dbReference type="UCSC" id="uc008vzz.2">
    <molecule id="Q91V12-3"/>
    <property type="organism name" value="mouse"/>
</dbReference>
<dbReference type="UCSC" id="uc008waa.2">
    <molecule id="Q91V12-2"/>
    <property type="organism name" value="mouse"/>
</dbReference>
<dbReference type="AGR" id="MGI:1917275"/>
<dbReference type="CTD" id="11332"/>
<dbReference type="MGI" id="MGI:1917275">
    <property type="gene designation" value="Acot7"/>
</dbReference>
<dbReference type="VEuPathDB" id="HostDB:ENSMUSG00000028937"/>
<dbReference type="eggNOG" id="KOG2763">
    <property type="taxonomic scope" value="Eukaryota"/>
</dbReference>
<dbReference type="GeneTree" id="ENSGT00940000155229"/>
<dbReference type="HOGENOM" id="CLU_050164_0_1_1"/>
<dbReference type="InParanoid" id="Q91V12"/>
<dbReference type="OMA" id="PTDVNWG"/>
<dbReference type="OrthoDB" id="331699at2759"/>
<dbReference type="PhylomeDB" id="Q91V12"/>
<dbReference type="TreeFam" id="TF329579"/>
<dbReference type="BRENDA" id="3.1.2.2">
    <property type="organism ID" value="3474"/>
</dbReference>
<dbReference type="BRENDA" id="3.1.2.20">
    <property type="organism ID" value="3474"/>
</dbReference>
<dbReference type="Reactome" id="R-MMU-77289">
    <property type="pathway name" value="Mitochondrial Fatty Acid Beta-Oxidation"/>
</dbReference>
<dbReference type="SABIO-RK" id="Q91V12"/>
<dbReference type="UniPathway" id="UPA00199"/>
<dbReference type="BioGRID-ORCS" id="70025">
    <property type="hits" value="1 hit in 80 CRISPR screens"/>
</dbReference>
<dbReference type="ChiTaRS" id="Acot7">
    <property type="organism name" value="mouse"/>
</dbReference>
<dbReference type="EvolutionaryTrace" id="Q91V12"/>
<dbReference type="PRO" id="PR:Q91V12"/>
<dbReference type="Proteomes" id="UP000000589">
    <property type="component" value="Chromosome 4"/>
</dbReference>
<dbReference type="RNAct" id="Q91V12">
    <property type="molecule type" value="protein"/>
</dbReference>
<dbReference type="Bgee" id="ENSMUSG00000028937">
    <property type="expression patterns" value="Expressed in seminiferous tubule of testis and 289 other cell types or tissues"/>
</dbReference>
<dbReference type="ExpressionAtlas" id="Q91V12">
    <property type="expression patterns" value="baseline and differential"/>
</dbReference>
<dbReference type="GO" id="GO:0005737">
    <property type="term" value="C:cytoplasm"/>
    <property type="evidence" value="ECO:0000314"/>
    <property type="project" value="MGI"/>
</dbReference>
<dbReference type="GO" id="GO:0005829">
    <property type="term" value="C:cytosol"/>
    <property type="evidence" value="ECO:0000314"/>
    <property type="project" value="MGI"/>
</dbReference>
<dbReference type="GO" id="GO:0005759">
    <property type="term" value="C:mitochondrial matrix"/>
    <property type="evidence" value="ECO:0000314"/>
    <property type="project" value="UniProtKB"/>
</dbReference>
<dbReference type="GO" id="GO:0043005">
    <property type="term" value="C:neuron projection"/>
    <property type="evidence" value="ECO:0000314"/>
    <property type="project" value="MGI"/>
</dbReference>
<dbReference type="GO" id="GO:0043025">
    <property type="term" value="C:neuronal cell body"/>
    <property type="evidence" value="ECO:0000314"/>
    <property type="project" value="MGI"/>
</dbReference>
<dbReference type="GO" id="GO:0052689">
    <property type="term" value="F:carboxylic ester hydrolase activity"/>
    <property type="evidence" value="ECO:0007669"/>
    <property type="project" value="UniProtKB-KW"/>
</dbReference>
<dbReference type="GO" id="GO:0042802">
    <property type="term" value="F:identical protein binding"/>
    <property type="evidence" value="ECO:0000353"/>
    <property type="project" value="IntAct"/>
</dbReference>
<dbReference type="GO" id="GO:0052816">
    <property type="term" value="F:long-chain fatty acyl-CoA hydrolase activity"/>
    <property type="evidence" value="ECO:0000314"/>
    <property type="project" value="MGI"/>
</dbReference>
<dbReference type="GO" id="GO:0009062">
    <property type="term" value="P:fatty acid catabolic process"/>
    <property type="evidence" value="ECO:0000314"/>
    <property type="project" value="MGI"/>
</dbReference>
<dbReference type="CDD" id="cd03442">
    <property type="entry name" value="BFIT_BACH"/>
    <property type="match status" value="2"/>
</dbReference>
<dbReference type="FunFam" id="3.10.129.10:FF:000009">
    <property type="entry name" value="Cytosolic acyl coenzyme A thioester hydrolase"/>
    <property type="match status" value="1"/>
</dbReference>
<dbReference type="FunFam" id="3.10.129.10:FF:000010">
    <property type="entry name" value="Cytosolic acyl coenzyme A thioester hydrolase"/>
    <property type="match status" value="1"/>
</dbReference>
<dbReference type="Gene3D" id="3.10.129.10">
    <property type="entry name" value="Hotdog Thioesterase"/>
    <property type="match status" value="2"/>
</dbReference>
<dbReference type="InterPro" id="IPR040170">
    <property type="entry name" value="Cytosol_ACT"/>
</dbReference>
<dbReference type="InterPro" id="IPR033120">
    <property type="entry name" value="HOTDOG_ACOT"/>
</dbReference>
<dbReference type="InterPro" id="IPR029069">
    <property type="entry name" value="HotDog_dom_sf"/>
</dbReference>
<dbReference type="InterPro" id="IPR006683">
    <property type="entry name" value="Thioestr_dom"/>
</dbReference>
<dbReference type="PANTHER" id="PTHR11049">
    <property type="entry name" value="ACYL COENZYME A THIOESTER HYDROLASE"/>
    <property type="match status" value="1"/>
</dbReference>
<dbReference type="PANTHER" id="PTHR11049:SF24">
    <property type="entry name" value="CYTOSOLIC ACYL COENZYME A THIOESTER HYDROLASE"/>
    <property type="match status" value="1"/>
</dbReference>
<dbReference type="Pfam" id="PF03061">
    <property type="entry name" value="4HBT"/>
    <property type="match status" value="2"/>
</dbReference>
<dbReference type="SUPFAM" id="SSF54637">
    <property type="entry name" value="Thioesterase/thiol ester dehydrase-isomerase"/>
    <property type="match status" value="2"/>
</dbReference>
<dbReference type="PROSITE" id="PS51770">
    <property type="entry name" value="HOTDOG_ACOT"/>
    <property type="match status" value="2"/>
</dbReference>
<keyword id="KW-0002">3D-structure</keyword>
<keyword id="KW-0007">Acetylation</keyword>
<keyword id="KW-0025">Alternative splicing</keyword>
<keyword id="KW-0963">Cytoplasm</keyword>
<keyword id="KW-0903">Direct protein sequencing</keyword>
<keyword id="KW-0276">Fatty acid metabolism</keyword>
<keyword id="KW-0378">Hydrolase</keyword>
<keyword id="KW-0443">Lipid metabolism</keyword>
<keyword id="KW-1185">Reference proteome</keyword>
<keyword id="KW-0677">Repeat</keyword>
<keyword id="KW-0719">Serine esterase</keyword>
<feature type="chain" id="PRO_0000053807" description="Cytosolic acyl coenzyme A thioester hydrolase">
    <location>
        <begin position="1"/>
        <end position="381"/>
    </location>
</feature>
<feature type="domain" description="HotDog ACOT-type 1" evidence="3">
    <location>
        <begin position="51"/>
        <end position="169"/>
    </location>
</feature>
<feature type="domain" description="HotDog ACOT-type 2" evidence="3">
    <location>
        <begin position="225"/>
        <end position="339"/>
    </location>
</feature>
<feature type="region of interest" description="Disordered" evidence="4">
    <location>
        <begin position="342"/>
        <end position="381"/>
    </location>
</feature>
<feature type="compositionally biased region" description="Basic and acidic residues" evidence="4">
    <location>
        <begin position="354"/>
        <end position="364"/>
    </location>
</feature>
<feature type="active site" evidence="8">
    <location>
        <position position="67"/>
    </location>
</feature>
<feature type="active site" evidence="8">
    <location>
        <position position="256"/>
    </location>
</feature>
<feature type="modified residue" description="N6-acetyllysine" evidence="1">
    <location>
        <position position="169"/>
    </location>
</feature>
<feature type="modified residue" description="N6-acetyllysine" evidence="1">
    <location>
        <position position="199"/>
    </location>
</feature>
<feature type="modified residue" description="N6-acetyllysine" evidence="1">
    <location>
        <position position="284"/>
    </location>
</feature>
<feature type="splice variant" id="VSP_000157" description="In isoform C." evidence="10">
    <original>MKLLVGTLRLWEVGRQVAFSSLTPGQECSGLRKTFWAAMRAVRTRADHQKLGHCVTMGR</original>
    <variation>MLTLHRALALRVLRKEVTEAYLREKVKQ</variation>
    <location>
        <begin position="1"/>
        <end position="59"/>
    </location>
</feature>
<feature type="splice variant" id="VSP_000158" description="In isoform A." evidence="9 12 13">
    <original>MKLLVGTLRLWEVGRQVAFSSLTPGQECSGLRKTFWAAMRAVRTRADHQKLGHCVTMG</original>
    <variation>MSGPTTDTPAAIQIC</variation>
    <location>
        <begin position="1"/>
        <end position="58"/>
    </location>
</feature>
<feature type="splice variant" id="VSP_016955" description="In isoform D." evidence="11">
    <original>MKLLVGTLRLWEVGRQVAFSSLTPGQECSGLRKTFWAAMRAVRTRADHQKLGHCVTMG</original>
    <variation>MAPPLPSSSMAPPRLIHSGTGLLDTCSQIPPPPPSSAVAAKMSGPTTDTPAAIQIC</variation>
    <location>
        <begin position="1"/>
        <end position="58"/>
    </location>
</feature>
<feature type="mutagenesis site" description="Dramatic reduction in catalytic activity." evidence="8">
    <original>N</original>
    <variation>A</variation>
    <location>
        <position position="67"/>
    </location>
</feature>
<feature type="mutagenesis site" description="Dramatic reduction in catalytic activity." evidence="8">
    <original>D</original>
    <variation>A</variation>
    <location>
        <position position="256"/>
    </location>
</feature>
<feature type="sequence conflict" description="In Ref. 4; BAE31092." evidence="14" ref="4">
    <original>E</original>
    <variation>D</variation>
    <location>
        <position position="186"/>
    </location>
</feature>
<feature type="strand" evidence="18">
    <location>
        <begin position="56"/>
        <end position="60"/>
    </location>
</feature>
<feature type="helix" evidence="17">
    <location>
        <begin position="63"/>
        <end position="65"/>
    </location>
</feature>
<feature type="strand" evidence="17">
    <location>
        <begin position="70"/>
        <end position="72"/>
    </location>
</feature>
<feature type="helix" evidence="17">
    <location>
        <begin position="74"/>
        <end position="93"/>
    </location>
</feature>
<feature type="turn" evidence="17">
    <location>
        <begin position="94"/>
        <end position="96"/>
    </location>
</feature>
<feature type="strand" evidence="17">
    <location>
        <begin position="101"/>
        <end position="108"/>
    </location>
</feature>
<feature type="strand" evidence="17">
    <location>
        <begin position="122"/>
        <end position="132"/>
    </location>
</feature>
<feature type="strand" evidence="17">
    <location>
        <begin position="137"/>
        <end position="146"/>
    </location>
</feature>
<feature type="turn" evidence="17">
    <location>
        <begin position="148"/>
        <end position="150"/>
    </location>
</feature>
<feature type="strand" evidence="17">
    <location>
        <begin position="153"/>
        <end position="170"/>
    </location>
</feature>
<feature type="helix" evidence="17">
    <location>
        <begin position="185"/>
        <end position="201"/>
    </location>
</feature>
<feature type="helix" evidence="16">
    <location>
        <begin position="224"/>
        <end position="227"/>
    </location>
</feature>
<feature type="strand" evidence="16">
    <location>
        <begin position="229"/>
        <end position="234"/>
    </location>
</feature>
<feature type="turn" evidence="18">
    <location>
        <begin position="237"/>
        <end position="239"/>
    </location>
</feature>
<feature type="strand" evidence="18">
    <location>
        <begin position="242"/>
        <end position="246"/>
    </location>
</feature>
<feature type="helix" evidence="16">
    <location>
        <begin position="248"/>
        <end position="267"/>
    </location>
</feature>
<feature type="strand" evidence="16">
    <location>
        <begin position="272"/>
        <end position="281"/>
    </location>
</feature>
<feature type="strand" evidence="16">
    <location>
        <begin position="289"/>
        <end position="301"/>
    </location>
</feature>
<feature type="strand" evidence="16">
    <location>
        <begin position="304"/>
        <end position="316"/>
    </location>
</feature>
<feature type="strand" evidence="18">
    <location>
        <begin position="319"/>
        <end position="321"/>
    </location>
</feature>
<feature type="strand" evidence="16">
    <location>
        <begin position="324"/>
        <end position="334"/>
    </location>
</feature>
<feature type="strand" evidence="18">
    <location>
        <begin position="338"/>
        <end position="340"/>
    </location>
</feature>
<feature type="helix" evidence="16">
    <location>
        <begin position="353"/>
        <end position="367"/>
    </location>
</feature>
<accession>Q91V12</accession>
<accession>A2A8K9</accession>
<accession>A2A8L0</accession>
<accession>A2A8L2</accession>
<accession>Q3U8C6</accession>
<accession>Q59HQ2</accession>
<reference key="1">
    <citation type="journal article" date="2002" name="Biochem. Biophys. Res. Commun.">
        <title>Human brain acyl-CoA hydrolase isoforms encoded by a single gene.</title>
        <authorList>
            <person name="Yamada J."/>
            <person name="Kuramochi Y."/>
            <person name="Takagi M."/>
            <person name="Watanabe T."/>
            <person name="Suga T."/>
        </authorList>
    </citation>
    <scope>NUCLEOTIDE SEQUENCE [MRNA] (ISOFORMS B AND C)</scope>
    <source>
        <strain>ICR</strain>
        <tissue>Brain</tissue>
    </source>
</reference>
<reference key="2">
    <citation type="journal article" date="2002" name="Brain Res. Mol. Brain Res.">
        <title>Characterization of mouse homolog of brain acyl-CoA hydrolase: molecular cloning and neuronal localization.</title>
        <authorList>
            <person name="Kuramochi Y."/>
            <person name="Takagi-Sakuma M."/>
            <person name="Kitahara M."/>
            <person name="Emori R."/>
            <person name="Asaba Y."/>
            <person name="Sakaguchi R."/>
            <person name="Watanabe T."/>
            <person name="Kuroda J."/>
            <person name="Hiratsuka K."/>
            <person name="Nagae Y."/>
            <person name="Suga T."/>
            <person name="Yamada J."/>
        </authorList>
    </citation>
    <scope>NUCLEOTIDE SEQUENCE [MRNA] (ISOFORM A)</scope>
    <scope>FUNCTION</scope>
    <scope>TISSUE SPECIFICITY</scope>
    <scope>ALTERNATIVE SPLICING</scope>
    <source>
        <strain>ICR</strain>
        <tissue>Brain</tissue>
    </source>
</reference>
<reference key="3">
    <citation type="journal article" date="2004" name="Arch. Biochem. Biophys.">
        <title>A 50-kDa isoform of mouse brain acyl-CoA hydrolase: expression and molecular properties.</title>
        <authorList>
            <person name="Takagi M."/>
            <person name="Kawabe K."/>
            <person name="Suga T."/>
            <person name="Yamada J."/>
        </authorList>
    </citation>
    <scope>NUCLEOTIDE SEQUENCE [MRNA] (ISOFORM D)</scope>
    <scope>FUNCTION</scope>
    <scope>CATALYTIC ACTIVITY</scope>
    <scope>BIOPHYSICOCHEMICAL PROPERTIES</scope>
    <scope>PATHWAY</scope>
    <scope>SUBCELLULAR LOCATION</scope>
    <source>
        <strain>ICR</strain>
        <tissue>Brain</tissue>
    </source>
</reference>
<reference key="4">
    <citation type="journal article" date="2005" name="Science">
        <title>The transcriptional landscape of the mammalian genome.</title>
        <authorList>
            <person name="Carninci P."/>
            <person name="Kasukawa T."/>
            <person name="Katayama S."/>
            <person name="Gough J."/>
            <person name="Frith M.C."/>
            <person name="Maeda N."/>
            <person name="Oyama R."/>
            <person name="Ravasi T."/>
            <person name="Lenhard B."/>
            <person name="Wells C."/>
            <person name="Kodzius R."/>
            <person name="Shimokawa K."/>
            <person name="Bajic V.B."/>
            <person name="Brenner S.E."/>
            <person name="Batalov S."/>
            <person name="Forrest A.R."/>
            <person name="Zavolan M."/>
            <person name="Davis M.J."/>
            <person name="Wilming L.G."/>
            <person name="Aidinis V."/>
            <person name="Allen J.E."/>
            <person name="Ambesi-Impiombato A."/>
            <person name="Apweiler R."/>
            <person name="Aturaliya R.N."/>
            <person name="Bailey T.L."/>
            <person name="Bansal M."/>
            <person name="Baxter L."/>
            <person name="Beisel K.W."/>
            <person name="Bersano T."/>
            <person name="Bono H."/>
            <person name="Chalk A.M."/>
            <person name="Chiu K.P."/>
            <person name="Choudhary V."/>
            <person name="Christoffels A."/>
            <person name="Clutterbuck D.R."/>
            <person name="Crowe M.L."/>
            <person name="Dalla E."/>
            <person name="Dalrymple B.P."/>
            <person name="de Bono B."/>
            <person name="Della Gatta G."/>
            <person name="di Bernardo D."/>
            <person name="Down T."/>
            <person name="Engstrom P."/>
            <person name="Fagiolini M."/>
            <person name="Faulkner G."/>
            <person name="Fletcher C.F."/>
            <person name="Fukushima T."/>
            <person name="Furuno M."/>
            <person name="Futaki S."/>
            <person name="Gariboldi M."/>
            <person name="Georgii-Hemming P."/>
            <person name="Gingeras T.R."/>
            <person name="Gojobori T."/>
            <person name="Green R.E."/>
            <person name="Gustincich S."/>
            <person name="Harbers M."/>
            <person name="Hayashi Y."/>
            <person name="Hensch T.K."/>
            <person name="Hirokawa N."/>
            <person name="Hill D."/>
            <person name="Huminiecki L."/>
            <person name="Iacono M."/>
            <person name="Ikeo K."/>
            <person name="Iwama A."/>
            <person name="Ishikawa T."/>
            <person name="Jakt M."/>
            <person name="Kanapin A."/>
            <person name="Katoh M."/>
            <person name="Kawasawa Y."/>
            <person name="Kelso J."/>
            <person name="Kitamura H."/>
            <person name="Kitano H."/>
            <person name="Kollias G."/>
            <person name="Krishnan S.P."/>
            <person name="Kruger A."/>
            <person name="Kummerfeld S.K."/>
            <person name="Kurochkin I.V."/>
            <person name="Lareau L.F."/>
            <person name="Lazarevic D."/>
            <person name="Lipovich L."/>
            <person name="Liu J."/>
            <person name="Liuni S."/>
            <person name="McWilliam S."/>
            <person name="Madan Babu M."/>
            <person name="Madera M."/>
            <person name="Marchionni L."/>
            <person name="Matsuda H."/>
            <person name="Matsuzawa S."/>
            <person name="Miki H."/>
            <person name="Mignone F."/>
            <person name="Miyake S."/>
            <person name="Morris K."/>
            <person name="Mottagui-Tabar S."/>
            <person name="Mulder N."/>
            <person name="Nakano N."/>
            <person name="Nakauchi H."/>
            <person name="Ng P."/>
            <person name="Nilsson R."/>
            <person name="Nishiguchi S."/>
            <person name="Nishikawa S."/>
            <person name="Nori F."/>
            <person name="Ohara O."/>
            <person name="Okazaki Y."/>
            <person name="Orlando V."/>
            <person name="Pang K.C."/>
            <person name="Pavan W.J."/>
            <person name="Pavesi G."/>
            <person name="Pesole G."/>
            <person name="Petrovsky N."/>
            <person name="Piazza S."/>
            <person name="Reed J."/>
            <person name="Reid J.F."/>
            <person name="Ring B.Z."/>
            <person name="Ringwald M."/>
            <person name="Rost B."/>
            <person name="Ruan Y."/>
            <person name="Salzberg S.L."/>
            <person name="Sandelin A."/>
            <person name="Schneider C."/>
            <person name="Schoenbach C."/>
            <person name="Sekiguchi K."/>
            <person name="Semple C.A."/>
            <person name="Seno S."/>
            <person name="Sessa L."/>
            <person name="Sheng Y."/>
            <person name="Shibata Y."/>
            <person name="Shimada H."/>
            <person name="Shimada K."/>
            <person name="Silva D."/>
            <person name="Sinclair B."/>
            <person name="Sperling S."/>
            <person name="Stupka E."/>
            <person name="Sugiura K."/>
            <person name="Sultana R."/>
            <person name="Takenaka Y."/>
            <person name="Taki K."/>
            <person name="Tammoja K."/>
            <person name="Tan S.L."/>
            <person name="Tang S."/>
            <person name="Taylor M.S."/>
            <person name="Tegner J."/>
            <person name="Teichmann S.A."/>
            <person name="Ueda H.R."/>
            <person name="van Nimwegen E."/>
            <person name="Verardo R."/>
            <person name="Wei C.L."/>
            <person name="Yagi K."/>
            <person name="Yamanishi H."/>
            <person name="Zabarovsky E."/>
            <person name="Zhu S."/>
            <person name="Zimmer A."/>
            <person name="Hide W."/>
            <person name="Bult C."/>
            <person name="Grimmond S.M."/>
            <person name="Teasdale R.D."/>
            <person name="Liu E.T."/>
            <person name="Brusic V."/>
            <person name="Quackenbush J."/>
            <person name="Wahlestedt C."/>
            <person name="Mattick J.S."/>
            <person name="Hume D.A."/>
            <person name="Kai C."/>
            <person name="Sasaki D."/>
            <person name="Tomaru Y."/>
            <person name="Fukuda S."/>
            <person name="Kanamori-Katayama M."/>
            <person name="Suzuki M."/>
            <person name="Aoki J."/>
            <person name="Arakawa T."/>
            <person name="Iida J."/>
            <person name="Imamura K."/>
            <person name="Itoh M."/>
            <person name="Kato T."/>
            <person name="Kawaji H."/>
            <person name="Kawagashira N."/>
            <person name="Kawashima T."/>
            <person name="Kojima M."/>
            <person name="Kondo S."/>
            <person name="Konno H."/>
            <person name="Nakano K."/>
            <person name="Ninomiya N."/>
            <person name="Nishio T."/>
            <person name="Okada M."/>
            <person name="Plessy C."/>
            <person name="Shibata K."/>
            <person name="Shiraki T."/>
            <person name="Suzuki S."/>
            <person name="Tagami M."/>
            <person name="Waki K."/>
            <person name="Watahiki A."/>
            <person name="Okamura-Oho Y."/>
            <person name="Suzuki H."/>
            <person name="Kawai J."/>
            <person name="Hayashizaki Y."/>
        </authorList>
    </citation>
    <scope>NUCLEOTIDE SEQUENCE [LARGE SCALE MRNA] (ISOFORM A)</scope>
    <source>
        <strain>C57BL/6J</strain>
        <tissue>Bone marrow</tissue>
    </source>
</reference>
<reference key="5">
    <citation type="journal article" date="2009" name="PLoS Biol.">
        <title>Lineage-specific biology revealed by a finished genome assembly of the mouse.</title>
        <authorList>
            <person name="Church D.M."/>
            <person name="Goodstadt L."/>
            <person name="Hillier L.W."/>
            <person name="Zody M.C."/>
            <person name="Goldstein S."/>
            <person name="She X."/>
            <person name="Bult C.J."/>
            <person name="Agarwala R."/>
            <person name="Cherry J.L."/>
            <person name="DiCuccio M."/>
            <person name="Hlavina W."/>
            <person name="Kapustin Y."/>
            <person name="Meric P."/>
            <person name="Maglott D."/>
            <person name="Birtle Z."/>
            <person name="Marques A.C."/>
            <person name="Graves T."/>
            <person name="Zhou S."/>
            <person name="Teague B."/>
            <person name="Potamousis K."/>
            <person name="Churas C."/>
            <person name="Place M."/>
            <person name="Herschleb J."/>
            <person name="Runnheim R."/>
            <person name="Forrest D."/>
            <person name="Amos-Landgraf J."/>
            <person name="Schwartz D.C."/>
            <person name="Cheng Z."/>
            <person name="Lindblad-Toh K."/>
            <person name="Eichler E.E."/>
            <person name="Ponting C.P."/>
        </authorList>
    </citation>
    <scope>NUCLEOTIDE SEQUENCE [LARGE SCALE GENOMIC DNA]</scope>
    <source>
        <strain>C57BL/6J</strain>
    </source>
</reference>
<reference key="6">
    <citation type="journal article" date="2004" name="Genome Res.">
        <title>The status, quality, and expansion of the NIH full-length cDNA project: the Mammalian Gene Collection (MGC).</title>
        <authorList>
            <consortium name="The MGC Project Team"/>
        </authorList>
    </citation>
    <scope>NUCLEOTIDE SEQUENCE [LARGE SCALE MRNA] (ISOFORM A)</scope>
    <source>
        <tissue>Colon</tissue>
    </source>
</reference>
<reference key="7">
    <citation type="submission" date="2007-07" db="UniProtKB">
        <authorList>
            <person name="Lubec G."/>
            <person name="Klug S."/>
            <person name="Yang J.W."/>
            <person name="Zigmond M."/>
        </authorList>
    </citation>
    <scope>PROTEIN SEQUENCE OF 174-184 AND 269-284</scope>
    <scope>IDENTIFICATION BY MASS SPECTROMETRY</scope>
    <source>
        <tissue>Brain</tissue>
        <tissue>Hippocampus</tissue>
    </source>
</reference>
<reference key="8">
    <citation type="journal article" date="2004" name="Neurosci. Lett.">
        <title>Expression of acyl-CoA hydrolase in the developing mouse brain.</title>
        <authorList>
            <person name="Yamada J."/>
            <person name="Kuramochi Y."/>
            <person name="Takagi M."/>
            <person name="Suga T."/>
        </authorList>
    </citation>
    <scope>DEVELOPMENTAL STAGE</scope>
</reference>
<reference key="9">
    <citation type="journal article" date="2010" name="Cell">
        <title>A tissue-specific atlas of mouse protein phosphorylation and expression.</title>
        <authorList>
            <person name="Huttlin E.L."/>
            <person name="Jedrychowski M.P."/>
            <person name="Elias J.E."/>
            <person name="Goswami T."/>
            <person name="Rad R."/>
            <person name="Beausoleil S.A."/>
            <person name="Villen J."/>
            <person name="Haas W."/>
            <person name="Sowa M.E."/>
            <person name="Gygi S.P."/>
        </authorList>
    </citation>
    <scope>IDENTIFICATION BY MASS SPECTROMETRY [LARGE SCALE ANALYSIS]</scope>
    <source>
        <tissue>Brain</tissue>
        <tissue>Heart</tissue>
        <tissue>Kidney</tissue>
        <tissue>Lung</tissue>
        <tissue>Spleen</tissue>
        <tissue>Testis</tissue>
    </source>
</reference>
<reference key="10">
    <citation type="journal article" date="2007" name="Proc. Natl. Acad. Sci. U.S.A.">
        <title>Structural basis for recruitment of tandem hotdog domains in acyl-CoA thioesterase 7 and its role in inflammation.</title>
        <authorList>
            <person name="Forwood J.K."/>
            <person name="Thakur A.S."/>
            <person name="Guncar G."/>
            <person name="Marfori M."/>
            <person name="Mouradov D."/>
            <person name="Meng W."/>
            <person name="Robinson J."/>
            <person name="Huber T."/>
            <person name="Kellie S."/>
            <person name="Martin J.L."/>
            <person name="Hume D.A."/>
            <person name="Kobe B."/>
        </authorList>
    </citation>
    <scope>X-RAY CRYSTALLOGRAPHY (2.5 ANGSTROMS) OF 203-381</scope>
    <scope>X-RAY CRYSTALLOGRAPHY (1.78 ANGSTROMS) OF 59-206 (ISOFORM A)</scope>
    <scope>SUBUNIT</scope>
    <scope>INDUCTION</scope>
    <scope>MUTAGENESIS OF ASN-67 AND ASP-256</scope>
    <scope>ACTIVE SITE</scope>
</reference>
<gene>
    <name type="primary">Acot7</name>
    <name type="synonym">Bach</name>
</gene>
<comment type="function">
    <text evidence="15">Catalyzes the hydrolysis of acyl-CoAs into free fatty acids and coenzyme A (CoASH), regulating their respective intracellular levels (Probable). Preferentially hydrolyzes palmitoyl-CoA, but has a broad specificity acting on other fatty acyl-CoAs with chain-lengths of C8-C18 (Probable). May play an important physiological function in brain (Probable).</text>
</comment>
<comment type="catalytic activity">
    <reaction evidence="7">
        <text>hexadecanoyl-CoA + H2O = hexadecanoate + CoA + H(+)</text>
        <dbReference type="Rhea" id="RHEA:16645"/>
        <dbReference type="ChEBI" id="CHEBI:7896"/>
        <dbReference type="ChEBI" id="CHEBI:15377"/>
        <dbReference type="ChEBI" id="CHEBI:15378"/>
        <dbReference type="ChEBI" id="CHEBI:57287"/>
        <dbReference type="ChEBI" id="CHEBI:57379"/>
        <dbReference type="EC" id="3.1.2.2"/>
    </reaction>
    <physiologicalReaction direction="left-to-right" evidence="15">
        <dbReference type="Rhea" id="RHEA:16646"/>
    </physiologicalReaction>
</comment>
<comment type="catalytic activity">
    <reaction evidence="2">
        <text>dodecanoyl-CoA + H2O = dodecanoate + CoA + H(+)</text>
        <dbReference type="Rhea" id="RHEA:30135"/>
        <dbReference type="ChEBI" id="CHEBI:15377"/>
        <dbReference type="ChEBI" id="CHEBI:15378"/>
        <dbReference type="ChEBI" id="CHEBI:18262"/>
        <dbReference type="ChEBI" id="CHEBI:57287"/>
        <dbReference type="ChEBI" id="CHEBI:57375"/>
    </reaction>
    <physiologicalReaction direction="left-to-right" evidence="2">
        <dbReference type="Rhea" id="RHEA:30136"/>
    </physiologicalReaction>
</comment>
<comment type="catalytic activity">
    <reaction evidence="2">
        <text>tetradecanoyl-CoA + H2O = tetradecanoate + CoA + H(+)</text>
        <dbReference type="Rhea" id="RHEA:40119"/>
        <dbReference type="ChEBI" id="CHEBI:15377"/>
        <dbReference type="ChEBI" id="CHEBI:15378"/>
        <dbReference type="ChEBI" id="CHEBI:30807"/>
        <dbReference type="ChEBI" id="CHEBI:57287"/>
        <dbReference type="ChEBI" id="CHEBI:57385"/>
    </reaction>
    <physiologicalReaction direction="left-to-right" evidence="2">
        <dbReference type="Rhea" id="RHEA:40120"/>
    </physiologicalReaction>
</comment>
<comment type="catalytic activity">
    <reaction evidence="2">
        <text>decanoyl-CoA + H2O = decanoate + CoA + H(+)</text>
        <dbReference type="Rhea" id="RHEA:40059"/>
        <dbReference type="ChEBI" id="CHEBI:15377"/>
        <dbReference type="ChEBI" id="CHEBI:15378"/>
        <dbReference type="ChEBI" id="CHEBI:27689"/>
        <dbReference type="ChEBI" id="CHEBI:57287"/>
        <dbReference type="ChEBI" id="CHEBI:61430"/>
    </reaction>
    <physiologicalReaction direction="left-to-right" evidence="2">
        <dbReference type="Rhea" id="RHEA:40060"/>
    </physiologicalReaction>
</comment>
<comment type="catalytic activity">
    <reaction evidence="2">
        <text>octanoyl-CoA + H2O = octanoate + CoA + H(+)</text>
        <dbReference type="Rhea" id="RHEA:30143"/>
        <dbReference type="ChEBI" id="CHEBI:15377"/>
        <dbReference type="ChEBI" id="CHEBI:15378"/>
        <dbReference type="ChEBI" id="CHEBI:25646"/>
        <dbReference type="ChEBI" id="CHEBI:57287"/>
        <dbReference type="ChEBI" id="CHEBI:57386"/>
    </reaction>
    <physiologicalReaction direction="left-to-right" evidence="2">
        <dbReference type="Rhea" id="RHEA:30144"/>
    </physiologicalReaction>
</comment>
<comment type="catalytic activity">
    <reaction evidence="2">
        <text>octadecanoyl-CoA + H2O = octadecanoate + CoA + H(+)</text>
        <dbReference type="Rhea" id="RHEA:30139"/>
        <dbReference type="ChEBI" id="CHEBI:15377"/>
        <dbReference type="ChEBI" id="CHEBI:15378"/>
        <dbReference type="ChEBI" id="CHEBI:25629"/>
        <dbReference type="ChEBI" id="CHEBI:57287"/>
        <dbReference type="ChEBI" id="CHEBI:57394"/>
    </reaction>
    <physiologicalReaction direction="left-to-right" evidence="2">
        <dbReference type="Rhea" id="RHEA:30140"/>
    </physiologicalReaction>
</comment>
<comment type="catalytic activity">
    <reaction evidence="2">
        <text>(9Z)-octadecenoyl-CoA + H2O = (9Z)-octadecenoate + CoA + H(+)</text>
        <dbReference type="Rhea" id="RHEA:40139"/>
        <dbReference type="ChEBI" id="CHEBI:15377"/>
        <dbReference type="ChEBI" id="CHEBI:15378"/>
        <dbReference type="ChEBI" id="CHEBI:30823"/>
        <dbReference type="ChEBI" id="CHEBI:57287"/>
        <dbReference type="ChEBI" id="CHEBI:57387"/>
    </reaction>
    <physiologicalReaction direction="left-to-right" evidence="2">
        <dbReference type="Rhea" id="RHEA:40140"/>
    </physiologicalReaction>
</comment>
<comment type="biophysicochemical properties">
    <kinetics>
        <KM evidence="7">16 uM for palmitoyl-CoA (isoform A at 30 degrees Celsius)</KM>
        <KM evidence="7">12 uM for palmitoyl-CoA (isoform D at 30 degrees Celsius)</KM>
    </kinetics>
</comment>
<comment type="pathway">
    <text evidence="15">Lipid metabolism; fatty acid metabolism.</text>
</comment>
<comment type="subunit">
    <text evidence="8">Homohexamer.</text>
</comment>
<comment type="interaction">
    <interactant intactId="EBI-15642238">
        <id>Q91V12-2</id>
    </interactant>
    <interactant intactId="EBI-15642238">
        <id>Q91V12-2</id>
        <label>Acot7</label>
    </interactant>
    <organismsDiffer>false</organismsDiffer>
    <experiments>5</experiments>
</comment>
<comment type="subcellular location">
    <molecule>Isoform A</molecule>
    <subcellularLocation>
        <location evidence="15">Cytoplasm</location>
        <location evidence="15">Cytosol</location>
    </subcellularLocation>
</comment>
<comment type="subcellular location">
    <molecule>Isoform D</molecule>
    <subcellularLocation>
        <location evidence="15">Cytoplasm</location>
        <location evidence="15">Cytosol</location>
    </subcellularLocation>
</comment>
<comment type="alternative products">
    <event type="alternative splicing"/>
    <isoform>
        <id>Q91V12-1</id>
        <name>B</name>
        <name>mBACHb</name>
        <sequence type="displayed"/>
    </isoform>
    <isoform>
        <id>Q91V12-2</id>
        <name>A</name>
        <name>mBach</name>
        <name>mBACHa</name>
        <name>43-kDa BACH</name>
        <sequence type="described" ref="VSP_000158"/>
    </isoform>
    <isoform>
        <id>Q91V12-3</id>
        <name>C</name>
        <name>mBACHc</name>
        <sequence type="described" ref="VSP_000157"/>
    </isoform>
    <isoform>
        <id>Q91V12-4</id>
        <name>D</name>
        <name>50-kDa BACH</name>
        <sequence type="described" ref="VSP_016955"/>
    </isoform>
</comment>
<comment type="tissue specificity">
    <text evidence="5">Widely expressed with highest levels in brain. High levels also found in thymus, large intestine and testis. Negligible in muscle and adipose tissue. In the central and peripheral nervous systems, displays a predominantly neuronal localization with highest expression in cell bodies and neurites.</text>
</comment>
<comment type="developmental stage">
    <text evidence="6">Detected in the brain as early as embryonic day (E) 11.5. The level was low until 12.5 dpc, but promptly elevated to a peak 7 days after birth. Thereafter, it declined somewhat and reached a steady-state level in adulthood. These changes in BACH expression were approximately reflected in the palmitoyl-CoA hydrolyzing activity in the developing mouse brain, and the time course was quite similar to that of microtubule-associated protein 2 (MAP2) expression. Induced during embryogenesis in association with neuronal differentiation, and persists after terminal differentiation into neurons in postnatal stages, resulting in the constitutive high expression of BACH in the adult brain in a neuron-specific manner.</text>
</comment>
<comment type="induction">
    <text evidence="8">Up-Regulated in activated macrophages.</text>
</comment>
<comment type="domain">
    <text>Both HotDog ACOT-type hydrolase domains are required for efficient activity.</text>
</comment>
<comment type="miscellaneous">
    <molecule>Isoform A</molecule>
    <text evidence="14">Major isoform.</text>
</comment>
<organism>
    <name type="scientific">Mus musculus</name>
    <name type="common">Mouse</name>
    <dbReference type="NCBI Taxonomy" id="10090"/>
    <lineage>
        <taxon>Eukaryota</taxon>
        <taxon>Metazoa</taxon>
        <taxon>Chordata</taxon>
        <taxon>Craniata</taxon>
        <taxon>Vertebrata</taxon>
        <taxon>Euteleostomi</taxon>
        <taxon>Mammalia</taxon>
        <taxon>Eutheria</taxon>
        <taxon>Euarchontoglires</taxon>
        <taxon>Glires</taxon>
        <taxon>Rodentia</taxon>
        <taxon>Myomorpha</taxon>
        <taxon>Muroidea</taxon>
        <taxon>Muridae</taxon>
        <taxon>Murinae</taxon>
        <taxon>Mus</taxon>
        <taxon>Mus</taxon>
    </lineage>
</organism>
<protein>
    <recommendedName>
        <fullName>Cytosolic acyl coenzyme A thioester hydrolase</fullName>
        <ecNumber evidence="2">3.1.2.2</ecNumber>
    </recommendedName>
    <alternativeName>
        <fullName>Acyl-CoA thioesterase 7</fullName>
    </alternativeName>
    <alternativeName>
        <fullName>Brain acyl-CoA hydrolase</fullName>
        <shortName>BACH</shortName>
    </alternativeName>
    <alternativeName>
        <fullName>CTE-IIa</fullName>
        <shortName>CTE-II</shortName>
    </alternativeName>
    <alternativeName>
        <fullName>Long chain acyl-CoA thioester hydrolase</fullName>
    </alternativeName>
</protein>
<evidence type="ECO:0000250" key="1">
    <source>
        <dbReference type="UniProtKB" id="O00154"/>
    </source>
</evidence>
<evidence type="ECO:0000250" key="2">
    <source>
        <dbReference type="UniProtKB" id="Q64559"/>
    </source>
</evidence>
<evidence type="ECO:0000255" key="3">
    <source>
        <dbReference type="PROSITE-ProRule" id="PRU01106"/>
    </source>
</evidence>
<evidence type="ECO:0000256" key="4">
    <source>
        <dbReference type="SAM" id="MobiDB-lite"/>
    </source>
</evidence>
<evidence type="ECO:0000269" key="5">
    <source>
    </source>
</evidence>
<evidence type="ECO:0000269" key="6">
    <source>
    </source>
</evidence>
<evidence type="ECO:0000269" key="7">
    <source>
    </source>
</evidence>
<evidence type="ECO:0000269" key="8">
    <source>
    </source>
</evidence>
<evidence type="ECO:0000303" key="9">
    <source>
    </source>
</evidence>
<evidence type="ECO:0000303" key="10">
    <source>
    </source>
</evidence>
<evidence type="ECO:0000303" key="11">
    <source>
    </source>
</evidence>
<evidence type="ECO:0000303" key="12">
    <source>
    </source>
</evidence>
<evidence type="ECO:0000303" key="13">
    <source>
    </source>
</evidence>
<evidence type="ECO:0000305" key="14"/>
<evidence type="ECO:0000305" key="15">
    <source>
    </source>
</evidence>
<evidence type="ECO:0007829" key="16">
    <source>
        <dbReference type="PDB" id="2Q2B"/>
    </source>
</evidence>
<evidence type="ECO:0007829" key="17">
    <source>
        <dbReference type="PDB" id="2V1O"/>
    </source>
</evidence>
<evidence type="ECO:0007829" key="18">
    <source>
        <dbReference type="PDB" id="6VFY"/>
    </source>
</evidence>